<comment type="function">
    <text evidence="1">Responsible for the release of ribosomes from messenger RNA at the termination of protein biosynthesis. May increase the efficiency of translation by recycling ribosomes from one round of translation to another.</text>
</comment>
<comment type="subcellular location">
    <subcellularLocation>
        <location evidence="1">Cytoplasm</location>
    </subcellularLocation>
</comment>
<comment type="similarity">
    <text evidence="1">Belongs to the RRF family.</text>
</comment>
<reference key="1">
    <citation type="journal article" date="2007" name="PLoS ONE">
        <title>Complete genomic characterization of a pathogenic A.II strain of Francisella tularensis subspecies tularensis.</title>
        <authorList>
            <person name="Beckstrom-Sternberg S.M."/>
            <person name="Auerbach R.K."/>
            <person name="Godbole S."/>
            <person name="Pearson J.V."/>
            <person name="Beckstrom-Sternberg J.S."/>
            <person name="Deng Z."/>
            <person name="Munk C."/>
            <person name="Kubota K."/>
            <person name="Zhou Y."/>
            <person name="Bruce D."/>
            <person name="Noronha J."/>
            <person name="Scheuermann R.H."/>
            <person name="Wang A."/>
            <person name="Wei X."/>
            <person name="Wang J."/>
            <person name="Hao J."/>
            <person name="Wagner D.M."/>
            <person name="Brettin T.S."/>
            <person name="Brown N."/>
            <person name="Gilna P."/>
            <person name="Keim P.S."/>
        </authorList>
    </citation>
    <scope>NUCLEOTIDE SEQUENCE [LARGE SCALE GENOMIC DNA]</scope>
    <source>
        <strain>WY96-3418</strain>
    </source>
</reference>
<gene>
    <name evidence="1" type="primary">frr</name>
    <name type="ordered locus">FTW_1766</name>
</gene>
<sequence length="185" mass="20553">MINDILKDAENRMKKSLEVLADDLAKIRTGRAHPDLLAHVTIDYYGVETPITQAANITVLDARTLGITPWEKGLSSKIEKAILTSDLGLNPTNLGDSLRVPMPALNEERRKELVKLVKSETEAGRVSIRNIRRDANGDIKELLKEKEITEDQAKKAEDDIQKITDKMIAQADALAAKKEQDLMAV</sequence>
<proteinExistence type="inferred from homology"/>
<evidence type="ECO:0000255" key="1">
    <source>
        <dbReference type="HAMAP-Rule" id="MF_00040"/>
    </source>
</evidence>
<feature type="chain" id="PRO_1000003169" description="Ribosome-recycling factor">
    <location>
        <begin position="1"/>
        <end position="185"/>
    </location>
</feature>
<organism>
    <name type="scientific">Francisella tularensis subsp. tularensis (strain WY96-3418)</name>
    <dbReference type="NCBI Taxonomy" id="418136"/>
    <lineage>
        <taxon>Bacteria</taxon>
        <taxon>Pseudomonadati</taxon>
        <taxon>Pseudomonadota</taxon>
        <taxon>Gammaproteobacteria</taxon>
        <taxon>Thiotrichales</taxon>
        <taxon>Francisellaceae</taxon>
        <taxon>Francisella</taxon>
    </lineage>
</organism>
<accession>A4IZU3</accession>
<keyword id="KW-0963">Cytoplasm</keyword>
<keyword id="KW-0648">Protein biosynthesis</keyword>
<dbReference type="EMBL" id="CP000608">
    <property type="protein sequence ID" value="ABO47442.1"/>
    <property type="molecule type" value="Genomic_DNA"/>
</dbReference>
<dbReference type="RefSeq" id="WP_003014302.1">
    <property type="nucleotide sequence ID" value="NC_009257.1"/>
</dbReference>
<dbReference type="SMR" id="A4IZU3"/>
<dbReference type="GeneID" id="75264270"/>
<dbReference type="KEGG" id="ftw:FTW_1766"/>
<dbReference type="HOGENOM" id="CLU_073981_2_0_6"/>
<dbReference type="GO" id="GO:0005829">
    <property type="term" value="C:cytosol"/>
    <property type="evidence" value="ECO:0007669"/>
    <property type="project" value="GOC"/>
</dbReference>
<dbReference type="GO" id="GO:0043023">
    <property type="term" value="F:ribosomal large subunit binding"/>
    <property type="evidence" value="ECO:0007669"/>
    <property type="project" value="TreeGrafter"/>
</dbReference>
<dbReference type="GO" id="GO:0002184">
    <property type="term" value="P:cytoplasmic translational termination"/>
    <property type="evidence" value="ECO:0007669"/>
    <property type="project" value="TreeGrafter"/>
</dbReference>
<dbReference type="CDD" id="cd00520">
    <property type="entry name" value="RRF"/>
    <property type="match status" value="1"/>
</dbReference>
<dbReference type="FunFam" id="1.10.132.20:FF:000001">
    <property type="entry name" value="Ribosome-recycling factor"/>
    <property type="match status" value="1"/>
</dbReference>
<dbReference type="FunFam" id="3.30.1360.40:FF:000001">
    <property type="entry name" value="Ribosome-recycling factor"/>
    <property type="match status" value="1"/>
</dbReference>
<dbReference type="Gene3D" id="3.30.1360.40">
    <property type="match status" value="1"/>
</dbReference>
<dbReference type="Gene3D" id="1.10.132.20">
    <property type="entry name" value="Ribosome-recycling factor"/>
    <property type="match status" value="1"/>
</dbReference>
<dbReference type="HAMAP" id="MF_00040">
    <property type="entry name" value="RRF"/>
    <property type="match status" value="1"/>
</dbReference>
<dbReference type="InterPro" id="IPR002661">
    <property type="entry name" value="Ribosome_recyc_fac"/>
</dbReference>
<dbReference type="InterPro" id="IPR023584">
    <property type="entry name" value="Ribosome_recyc_fac_dom"/>
</dbReference>
<dbReference type="InterPro" id="IPR036191">
    <property type="entry name" value="RRF_sf"/>
</dbReference>
<dbReference type="NCBIfam" id="TIGR00496">
    <property type="entry name" value="frr"/>
    <property type="match status" value="1"/>
</dbReference>
<dbReference type="PANTHER" id="PTHR20982:SF3">
    <property type="entry name" value="MITOCHONDRIAL RIBOSOME RECYCLING FACTOR PSEUDO 1"/>
    <property type="match status" value="1"/>
</dbReference>
<dbReference type="PANTHER" id="PTHR20982">
    <property type="entry name" value="RIBOSOME RECYCLING FACTOR"/>
    <property type="match status" value="1"/>
</dbReference>
<dbReference type="Pfam" id="PF01765">
    <property type="entry name" value="RRF"/>
    <property type="match status" value="1"/>
</dbReference>
<dbReference type="SUPFAM" id="SSF55194">
    <property type="entry name" value="Ribosome recycling factor, RRF"/>
    <property type="match status" value="1"/>
</dbReference>
<name>RRF_FRATW</name>
<protein>
    <recommendedName>
        <fullName evidence="1">Ribosome-recycling factor</fullName>
        <shortName evidence="1">RRF</shortName>
    </recommendedName>
    <alternativeName>
        <fullName evidence="1">Ribosome-releasing factor</fullName>
    </alternativeName>
</protein>